<sequence>MNTEFTLTQKRALAILTLIALLFGAYFLRNYFVLIVVAAVGAYLFTPLFKWFTKRFNTGLSAACTLLSALAAVVVPVGALVGLAIVQIARMVDSVADWVRTTDLSTLGDKILQFVNGLFDRVPFLHITVTADALRKAMISVAQNVGEWLLHFLRDAAGSLAGVITSAIIFVYVFVALLVNREKLRTLIGQLNPLGEDVTDLYLQKMGSMVRGTVNGQFVIAACQGVAGAASIYIAGFHHGFFIFAIVLTALSIIPLGGGIVTIPFGIGMIFYGNIAGGIFVLLWHLLVVTNIDNVLRPILVPRDARLNSALMLLSVFAGITMFGPWGIIIGPVLMILIVTTIDVYLAVYKGVELEQFEAPPVRRRWLPRRGPATSRNAPPPSTAE</sequence>
<gene>
    <name type="ordered locus">MT1133</name>
</gene>
<name>Y1101_MYCTO</name>
<feature type="chain" id="PRO_0000428514" description="Putative transport protein MT1133">
    <location>
        <begin position="1"/>
        <end position="385"/>
    </location>
</feature>
<feature type="transmembrane region" description="Helical" evidence="1">
    <location>
        <begin position="7"/>
        <end position="27"/>
    </location>
</feature>
<feature type="transmembrane region" description="Helical" evidence="1">
    <location>
        <begin position="32"/>
        <end position="52"/>
    </location>
</feature>
<feature type="transmembrane region" description="Helical" evidence="1">
    <location>
        <begin position="66"/>
        <end position="86"/>
    </location>
</feature>
<feature type="transmembrane region" description="Helical" evidence="1">
    <location>
        <begin position="159"/>
        <end position="179"/>
    </location>
</feature>
<feature type="transmembrane region" description="Helical" evidence="1">
    <location>
        <begin position="218"/>
        <end position="238"/>
    </location>
</feature>
<feature type="transmembrane region" description="Helical" evidence="1">
    <location>
        <begin position="241"/>
        <end position="261"/>
    </location>
</feature>
<feature type="transmembrane region" description="Helical" evidence="1">
    <location>
        <begin position="263"/>
        <end position="283"/>
    </location>
</feature>
<feature type="transmembrane region" description="Helical" evidence="1">
    <location>
        <begin position="319"/>
        <end position="339"/>
    </location>
</feature>
<dbReference type="EMBL" id="AE000516">
    <property type="protein sequence ID" value="AAK45391.1"/>
    <property type="molecule type" value="Genomic_DNA"/>
</dbReference>
<dbReference type="PIR" id="C70897">
    <property type="entry name" value="C70897"/>
</dbReference>
<dbReference type="RefSeq" id="WP_003898727.1">
    <property type="nucleotide sequence ID" value="NZ_KK341227.1"/>
</dbReference>
<dbReference type="SMR" id="P9WFM2"/>
<dbReference type="KEGG" id="mtc:MT1133"/>
<dbReference type="PATRIC" id="fig|83331.31.peg.1223"/>
<dbReference type="HOGENOM" id="CLU_041771_2_3_11"/>
<dbReference type="Proteomes" id="UP000001020">
    <property type="component" value="Chromosome"/>
</dbReference>
<dbReference type="GO" id="GO:0005886">
    <property type="term" value="C:plasma membrane"/>
    <property type="evidence" value="ECO:0007669"/>
    <property type="project" value="UniProtKB-SubCell"/>
</dbReference>
<dbReference type="InterPro" id="IPR002549">
    <property type="entry name" value="AI-2E-like"/>
</dbReference>
<dbReference type="PANTHER" id="PTHR21716">
    <property type="entry name" value="TRANSMEMBRANE PROTEIN"/>
    <property type="match status" value="1"/>
</dbReference>
<dbReference type="PANTHER" id="PTHR21716:SF4">
    <property type="entry name" value="TRANSMEMBRANE PROTEIN 245"/>
    <property type="match status" value="1"/>
</dbReference>
<dbReference type="Pfam" id="PF01594">
    <property type="entry name" value="AI-2E_transport"/>
    <property type="match status" value="1"/>
</dbReference>
<proteinExistence type="inferred from homology"/>
<protein>
    <recommendedName>
        <fullName>Putative transport protein MT1133</fullName>
    </recommendedName>
</protein>
<accession>P9WFM2</accession>
<accession>L0T7A7</accession>
<accession>O53449</accession>
<keyword id="KW-1003">Cell membrane</keyword>
<keyword id="KW-0472">Membrane</keyword>
<keyword id="KW-1185">Reference proteome</keyword>
<keyword id="KW-0812">Transmembrane</keyword>
<keyword id="KW-1133">Transmembrane helix</keyword>
<keyword id="KW-0813">Transport</keyword>
<organism>
    <name type="scientific">Mycobacterium tuberculosis (strain CDC 1551 / Oshkosh)</name>
    <dbReference type="NCBI Taxonomy" id="83331"/>
    <lineage>
        <taxon>Bacteria</taxon>
        <taxon>Bacillati</taxon>
        <taxon>Actinomycetota</taxon>
        <taxon>Actinomycetes</taxon>
        <taxon>Mycobacteriales</taxon>
        <taxon>Mycobacteriaceae</taxon>
        <taxon>Mycobacterium</taxon>
        <taxon>Mycobacterium tuberculosis complex</taxon>
    </lineage>
</organism>
<evidence type="ECO:0000255" key="1"/>
<evidence type="ECO:0000305" key="2"/>
<comment type="subcellular location">
    <subcellularLocation>
        <location evidence="2">Cell membrane</location>
        <topology evidence="2">Multi-pass membrane protein</topology>
    </subcellularLocation>
</comment>
<comment type="similarity">
    <text evidence="2">Belongs to the autoinducer-2 exporter (AI-2E) (TC 2.A.86) family.</text>
</comment>
<reference key="1">
    <citation type="journal article" date="2002" name="J. Bacteriol.">
        <title>Whole-genome comparison of Mycobacterium tuberculosis clinical and laboratory strains.</title>
        <authorList>
            <person name="Fleischmann R.D."/>
            <person name="Alland D."/>
            <person name="Eisen J.A."/>
            <person name="Carpenter L."/>
            <person name="White O."/>
            <person name="Peterson J.D."/>
            <person name="DeBoy R.T."/>
            <person name="Dodson R.J."/>
            <person name="Gwinn M.L."/>
            <person name="Haft D.H."/>
            <person name="Hickey E.K."/>
            <person name="Kolonay J.F."/>
            <person name="Nelson W.C."/>
            <person name="Umayam L.A."/>
            <person name="Ermolaeva M.D."/>
            <person name="Salzberg S.L."/>
            <person name="Delcher A."/>
            <person name="Utterback T.R."/>
            <person name="Weidman J.F."/>
            <person name="Khouri H.M."/>
            <person name="Gill J."/>
            <person name="Mikula A."/>
            <person name="Bishai W."/>
            <person name="Jacobs W.R. Jr."/>
            <person name="Venter J.C."/>
            <person name="Fraser C.M."/>
        </authorList>
    </citation>
    <scope>NUCLEOTIDE SEQUENCE [LARGE SCALE GENOMIC DNA]</scope>
    <source>
        <strain>CDC 1551 / Oshkosh</strain>
    </source>
</reference>